<dbReference type="EMBL" id="CP000308">
    <property type="protein sequence ID" value="ABG13432.1"/>
    <property type="molecule type" value="Genomic_DNA"/>
</dbReference>
<dbReference type="RefSeq" id="WP_002211739.1">
    <property type="nucleotide sequence ID" value="NZ_CP009906.1"/>
</dbReference>
<dbReference type="KEGG" id="ypa:YPA_1465"/>
<dbReference type="Proteomes" id="UP000001971">
    <property type="component" value="Chromosome"/>
</dbReference>
<dbReference type="HAMAP" id="MF_00676">
    <property type="entry name" value="UPF0260"/>
    <property type="match status" value="1"/>
</dbReference>
<dbReference type="InterPro" id="IPR005358">
    <property type="entry name" value="Puta_zinc/iron-chelating_dom"/>
</dbReference>
<dbReference type="InterPro" id="IPR008228">
    <property type="entry name" value="UCP006173"/>
</dbReference>
<dbReference type="NCBIfam" id="NF003498">
    <property type="entry name" value="PRK05170.1-1"/>
    <property type="match status" value="1"/>
</dbReference>
<dbReference type="NCBIfam" id="NF003501">
    <property type="entry name" value="PRK05170.1-5"/>
    <property type="match status" value="1"/>
</dbReference>
<dbReference type="NCBIfam" id="NF003507">
    <property type="entry name" value="PRK05170.2-5"/>
    <property type="match status" value="1"/>
</dbReference>
<dbReference type="PANTHER" id="PTHR37421">
    <property type="entry name" value="UPF0260 PROTEIN YCGN"/>
    <property type="match status" value="1"/>
</dbReference>
<dbReference type="PANTHER" id="PTHR37421:SF1">
    <property type="entry name" value="UPF0260 PROTEIN YCGN"/>
    <property type="match status" value="1"/>
</dbReference>
<dbReference type="Pfam" id="PF03692">
    <property type="entry name" value="CxxCxxCC"/>
    <property type="match status" value="1"/>
</dbReference>
<dbReference type="PIRSF" id="PIRSF006173">
    <property type="entry name" value="UCP006173"/>
    <property type="match status" value="1"/>
</dbReference>
<sequence>MSQPPFWQQKTLAEMSDSEWESLCDGCGQCCLNKLIDEDTDEIYFTNVACDQLNIKTCQCSNYERRFELEEDCIKLTRENLVTFAWLPPTCAYRLIGEGHDLPRWHPLLTGSKAAMHGERISVRHIAVRESEVVDWQDHILNKPSWAK</sequence>
<gene>
    <name type="ordered locus">YPA_1465</name>
</gene>
<protein>
    <recommendedName>
        <fullName evidence="1">UPF0260 protein YPA_1465</fullName>
    </recommendedName>
</protein>
<reference key="1">
    <citation type="journal article" date="2006" name="J. Bacteriol.">
        <title>Complete genome sequence of Yersinia pestis strains Antiqua and Nepal516: evidence of gene reduction in an emerging pathogen.</title>
        <authorList>
            <person name="Chain P.S.G."/>
            <person name="Hu P."/>
            <person name="Malfatti S.A."/>
            <person name="Radnedge L."/>
            <person name="Larimer F."/>
            <person name="Vergez L.M."/>
            <person name="Worsham P."/>
            <person name="Chu M.C."/>
            <person name="Andersen G.L."/>
        </authorList>
    </citation>
    <scope>NUCLEOTIDE SEQUENCE [LARGE SCALE GENOMIC DNA]</scope>
    <source>
        <strain>Antiqua</strain>
    </source>
</reference>
<evidence type="ECO:0000255" key="1">
    <source>
        <dbReference type="HAMAP-Rule" id="MF_00676"/>
    </source>
</evidence>
<feature type="chain" id="PRO_1000044818" description="UPF0260 protein YPA_1465">
    <location>
        <begin position="1"/>
        <end position="148"/>
    </location>
</feature>
<comment type="similarity">
    <text evidence="1">Belongs to the UPF0260 family.</text>
</comment>
<accession>Q1C7Z0</accession>
<proteinExistence type="inferred from homology"/>
<organism>
    <name type="scientific">Yersinia pestis bv. Antiqua (strain Antiqua)</name>
    <dbReference type="NCBI Taxonomy" id="360102"/>
    <lineage>
        <taxon>Bacteria</taxon>
        <taxon>Pseudomonadati</taxon>
        <taxon>Pseudomonadota</taxon>
        <taxon>Gammaproteobacteria</taxon>
        <taxon>Enterobacterales</taxon>
        <taxon>Yersiniaceae</taxon>
        <taxon>Yersinia</taxon>
    </lineage>
</organism>
<name>Y1465_YERPA</name>